<organism>
    <name type="scientific">Shewanella denitrificans (strain OS217 / ATCC BAA-1090 / DSM 15013)</name>
    <dbReference type="NCBI Taxonomy" id="318161"/>
    <lineage>
        <taxon>Bacteria</taxon>
        <taxon>Pseudomonadati</taxon>
        <taxon>Pseudomonadota</taxon>
        <taxon>Gammaproteobacteria</taxon>
        <taxon>Alteromonadales</taxon>
        <taxon>Shewanellaceae</taxon>
        <taxon>Shewanella</taxon>
    </lineage>
</organism>
<feature type="chain" id="PRO_0000298723" description="Pyrimidine/purine nucleoside phosphorylase">
    <location>
        <begin position="1"/>
        <end position="103"/>
    </location>
</feature>
<protein>
    <recommendedName>
        <fullName evidence="1">Pyrimidine/purine nucleoside phosphorylase</fullName>
        <ecNumber evidence="1">2.4.2.1</ecNumber>
        <ecNumber evidence="1">2.4.2.2</ecNumber>
    </recommendedName>
    <alternativeName>
        <fullName evidence="1">Adenosine phosphorylase</fullName>
    </alternativeName>
    <alternativeName>
        <fullName evidence="1">Cytidine phosphorylase</fullName>
    </alternativeName>
    <alternativeName>
        <fullName evidence="1">Guanosine phosphorylase</fullName>
    </alternativeName>
    <alternativeName>
        <fullName evidence="1">Inosine phosphorylase</fullName>
    </alternativeName>
    <alternativeName>
        <fullName evidence="1">Thymidine phosphorylase</fullName>
    </alternativeName>
    <alternativeName>
        <fullName evidence="1">Uridine phosphorylase</fullName>
    </alternativeName>
    <alternativeName>
        <fullName evidence="1">Xanthosine phosphorylase</fullName>
    </alternativeName>
</protein>
<proteinExistence type="inferred from homology"/>
<sequence length="103" mass="11793">MSQFNNVTLVKAANVYFDGKVSSRTVQFNDGSHKTLGLMLPGEYEFGTQAKELMEIMSGELQIMLPESHTWQSIVGPQSFEARESPDNCFYFQFSRHAWCYLI</sequence>
<gene>
    <name evidence="1" type="primary">ppnP</name>
    <name type="ordered locus">Sden_1472</name>
</gene>
<accession>Q12P69</accession>
<evidence type="ECO:0000255" key="1">
    <source>
        <dbReference type="HAMAP-Rule" id="MF_01537"/>
    </source>
</evidence>
<dbReference type="EC" id="2.4.2.1" evidence="1"/>
<dbReference type="EC" id="2.4.2.2" evidence="1"/>
<dbReference type="EMBL" id="CP000302">
    <property type="protein sequence ID" value="ABE54757.1"/>
    <property type="molecule type" value="Genomic_DNA"/>
</dbReference>
<dbReference type="RefSeq" id="WP_011495915.1">
    <property type="nucleotide sequence ID" value="NC_007954.1"/>
</dbReference>
<dbReference type="SMR" id="Q12P69"/>
<dbReference type="STRING" id="318161.Sden_1472"/>
<dbReference type="KEGG" id="sdn:Sden_1472"/>
<dbReference type="eggNOG" id="COG3123">
    <property type="taxonomic scope" value="Bacteria"/>
</dbReference>
<dbReference type="HOGENOM" id="CLU_157874_1_0_6"/>
<dbReference type="OrthoDB" id="9793848at2"/>
<dbReference type="Proteomes" id="UP000001982">
    <property type="component" value="Chromosome"/>
</dbReference>
<dbReference type="GO" id="GO:0005829">
    <property type="term" value="C:cytosol"/>
    <property type="evidence" value="ECO:0007669"/>
    <property type="project" value="TreeGrafter"/>
</dbReference>
<dbReference type="GO" id="GO:0047975">
    <property type="term" value="F:guanosine phosphorylase activity"/>
    <property type="evidence" value="ECO:0007669"/>
    <property type="project" value="UniProtKB-EC"/>
</dbReference>
<dbReference type="GO" id="GO:0004731">
    <property type="term" value="F:purine-nucleoside phosphorylase activity"/>
    <property type="evidence" value="ECO:0007669"/>
    <property type="project" value="UniProtKB-UniRule"/>
</dbReference>
<dbReference type="GO" id="GO:0009032">
    <property type="term" value="F:thymidine phosphorylase activity"/>
    <property type="evidence" value="ECO:0007669"/>
    <property type="project" value="UniProtKB-EC"/>
</dbReference>
<dbReference type="GO" id="GO:0004850">
    <property type="term" value="F:uridine phosphorylase activity"/>
    <property type="evidence" value="ECO:0007669"/>
    <property type="project" value="UniProtKB-EC"/>
</dbReference>
<dbReference type="Gene3D" id="2.60.120.10">
    <property type="entry name" value="Jelly Rolls"/>
    <property type="match status" value="1"/>
</dbReference>
<dbReference type="HAMAP" id="MF_01537">
    <property type="entry name" value="Nucleos_phosphorylase_PpnP"/>
    <property type="match status" value="1"/>
</dbReference>
<dbReference type="InterPro" id="IPR009664">
    <property type="entry name" value="Ppnp"/>
</dbReference>
<dbReference type="InterPro" id="IPR014710">
    <property type="entry name" value="RmlC-like_jellyroll"/>
</dbReference>
<dbReference type="InterPro" id="IPR011051">
    <property type="entry name" value="RmlC_Cupin_sf"/>
</dbReference>
<dbReference type="PANTHER" id="PTHR36540">
    <property type="entry name" value="PYRIMIDINE/PURINE NUCLEOSIDE PHOSPHORYLASE"/>
    <property type="match status" value="1"/>
</dbReference>
<dbReference type="PANTHER" id="PTHR36540:SF1">
    <property type="entry name" value="PYRIMIDINE_PURINE NUCLEOSIDE PHOSPHORYLASE"/>
    <property type="match status" value="1"/>
</dbReference>
<dbReference type="Pfam" id="PF06865">
    <property type="entry name" value="Ppnp"/>
    <property type="match status" value="1"/>
</dbReference>
<dbReference type="SUPFAM" id="SSF51182">
    <property type="entry name" value="RmlC-like cupins"/>
    <property type="match status" value="1"/>
</dbReference>
<keyword id="KW-0328">Glycosyltransferase</keyword>
<keyword id="KW-1185">Reference proteome</keyword>
<keyword id="KW-0808">Transferase</keyword>
<comment type="function">
    <text evidence="1">Catalyzes the phosphorolysis of diverse nucleosides, yielding D-ribose 1-phosphate and the respective free bases. Can use uridine, adenosine, guanosine, cytidine, thymidine, inosine and xanthosine as substrates. Also catalyzes the reverse reactions.</text>
</comment>
<comment type="catalytic activity">
    <reaction evidence="1">
        <text>a purine D-ribonucleoside + phosphate = a purine nucleobase + alpha-D-ribose 1-phosphate</text>
        <dbReference type="Rhea" id="RHEA:19805"/>
        <dbReference type="ChEBI" id="CHEBI:26386"/>
        <dbReference type="ChEBI" id="CHEBI:43474"/>
        <dbReference type="ChEBI" id="CHEBI:57720"/>
        <dbReference type="ChEBI" id="CHEBI:142355"/>
        <dbReference type="EC" id="2.4.2.1"/>
    </reaction>
</comment>
<comment type="catalytic activity">
    <reaction evidence="1">
        <text>adenosine + phosphate = alpha-D-ribose 1-phosphate + adenine</text>
        <dbReference type="Rhea" id="RHEA:27642"/>
        <dbReference type="ChEBI" id="CHEBI:16335"/>
        <dbReference type="ChEBI" id="CHEBI:16708"/>
        <dbReference type="ChEBI" id="CHEBI:43474"/>
        <dbReference type="ChEBI" id="CHEBI:57720"/>
        <dbReference type="EC" id="2.4.2.1"/>
    </reaction>
</comment>
<comment type="catalytic activity">
    <reaction evidence="1">
        <text>cytidine + phosphate = cytosine + alpha-D-ribose 1-phosphate</text>
        <dbReference type="Rhea" id="RHEA:52540"/>
        <dbReference type="ChEBI" id="CHEBI:16040"/>
        <dbReference type="ChEBI" id="CHEBI:17562"/>
        <dbReference type="ChEBI" id="CHEBI:43474"/>
        <dbReference type="ChEBI" id="CHEBI:57720"/>
        <dbReference type="EC" id="2.4.2.2"/>
    </reaction>
</comment>
<comment type="catalytic activity">
    <reaction evidence="1">
        <text>guanosine + phosphate = alpha-D-ribose 1-phosphate + guanine</text>
        <dbReference type="Rhea" id="RHEA:13233"/>
        <dbReference type="ChEBI" id="CHEBI:16235"/>
        <dbReference type="ChEBI" id="CHEBI:16750"/>
        <dbReference type="ChEBI" id="CHEBI:43474"/>
        <dbReference type="ChEBI" id="CHEBI:57720"/>
        <dbReference type="EC" id="2.4.2.1"/>
    </reaction>
</comment>
<comment type="catalytic activity">
    <reaction evidence="1">
        <text>inosine + phosphate = alpha-D-ribose 1-phosphate + hypoxanthine</text>
        <dbReference type="Rhea" id="RHEA:27646"/>
        <dbReference type="ChEBI" id="CHEBI:17368"/>
        <dbReference type="ChEBI" id="CHEBI:17596"/>
        <dbReference type="ChEBI" id="CHEBI:43474"/>
        <dbReference type="ChEBI" id="CHEBI:57720"/>
        <dbReference type="EC" id="2.4.2.1"/>
    </reaction>
</comment>
<comment type="catalytic activity">
    <reaction evidence="1">
        <text>thymidine + phosphate = 2-deoxy-alpha-D-ribose 1-phosphate + thymine</text>
        <dbReference type="Rhea" id="RHEA:16037"/>
        <dbReference type="ChEBI" id="CHEBI:17748"/>
        <dbReference type="ChEBI" id="CHEBI:17821"/>
        <dbReference type="ChEBI" id="CHEBI:43474"/>
        <dbReference type="ChEBI" id="CHEBI:57259"/>
        <dbReference type="EC" id="2.4.2.2"/>
    </reaction>
</comment>
<comment type="catalytic activity">
    <reaction evidence="1">
        <text>uridine + phosphate = alpha-D-ribose 1-phosphate + uracil</text>
        <dbReference type="Rhea" id="RHEA:24388"/>
        <dbReference type="ChEBI" id="CHEBI:16704"/>
        <dbReference type="ChEBI" id="CHEBI:17568"/>
        <dbReference type="ChEBI" id="CHEBI:43474"/>
        <dbReference type="ChEBI" id="CHEBI:57720"/>
        <dbReference type="EC" id="2.4.2.2"/>
    </reaction>
</comment>
<comment type="catalytic activity">
    <reaction evidence="1">
        <text>xanthosine + phosphate = alpha-D-ribose 1-phosphate + xanthine</text>
        <dbReference type="Rhea" id="RHEA:27638"/>
        <dbReference type="ChEBI" id="CHEBI:17712"/>
        <dbReference type="ChEBI" id="CHEBI:18107"/>
        <dbReference type="ChEBI" id="CHEBI:43474"/>
        <dbReference type="ChEBI" id="CHEBI:57720"/>
        <dbReference type="EC" id="2.4.2.1"/>
    </reaction>
</comment>
<comment type="similarity">
    <text evidence="1">Belongs to the nucleoside phosphorylase PpnP family.</text>
</comment>
<reference key="1">
    <citation type="submission" date="2006-03" db="EMBL/GenBank/DDBJ databases">
        <title>Complete sequence of Shewanella denitrificans OS217.</title>
        <authorList>
            <consortium name="US DOE Joint Genome Institute"/>
            <person name="Copeland A."/>
            <person name="Lucas S."/>
            <person name="Lapidus A."/>
            <person name="Barry K."/>
            <person name="Detter J.C."/>
            <person name="Glavina del Rio T."/>
            <person name="Hammon N."/>
            <person name="Israni S."/>
            <person name="Dalin E."/>
            <person name="Tice H."/>
            <person name="Pitluck S."/>
            <person name="Brettin T."/>
            <person name="Bruce D."/>
            <person name="Han C."/>
            <person name="Tapia R."/>
            <person name="Gilna P."/>
            <person name="Kiss H."/>
            <person name="Schmutz J."/>
            <person name="Larimer F."/>
            <person name="Land M."/>
            <person name="Hauser L."/>
            <person name="Kyrpides N."/>
            <person name="Lykidis A."/>
            <person name="Richardson P."/>
        </authorList>
    </citation>
    <scope>NUCLEOTIDE SEQUENCE [LARGE SCALE GENOMIC DNA]</scope>
    <source>
        <strain>OS217 / ATCC BAA-1090 / DSM 15013</strain>
    </source>
</reference>
<name>PPNP_SHEDO</name>